<accession>Q9MA50</accession>
<evidence type="ECO:0000255" key="1"/>
<evidence type="ECO:0000305" key="2"/>
<organism>
    <name type="scientific">Arabidopsis thaliana</name>
    <name type="common">Mouse-ear cress</name>
    <dbReference type="NCBI Taxonomy" id="3702"/>
    <lineage>
        <taxon>Eukaryota</taxon>
        <taxon>Viridiplantae</taxon>
        <taxon>Streptophyta</taxon>
        <taxon>Embryophyta</taxon>
        <taxon>Tracheophyta</taxon>
        <taxon>Spermatophyta</taxon>
        <taxon>Magnoliopsida</taxon>
        <taxon>eudicotyledons</taxon>
        <taxon>Gunneridae</taxon>
        <taxon>Pentapetalae</taxon>
        <taxon>rosids</taxon>
        <taxon>malvids</taxon>
        <taxon>Brassicales</taxon>
        <taxon>Brassicaceae</taxon>
        <taxon>Camelineae</taxon>
        <taxon>Arabidopsis</taxon>
    </lineage>
</organism>
<keyword id="KW-0150">Chloroplast</keyword>
<keyword id="KW-0934">Plastid</keyword>
<keyword id="KW-1185">Reference proteome</keyword>
<keyword id="KW-0677">Repeat</keyword>
<keyword id="KW-0809">Transit peptide</keyword>
<dbReference type="EMBL" id="AC009999">
    <property type="protein sequence ID" value="AAF29381.1"/>
    <property type="molecule type" value="Genomic_DNA"/>
</dbReference>
<dbReference type="EMBL" id="CP002684">
    <property type="protein sequence ID" value="AEE27887.1"/>
    <property type="molecule type" value="Genomic_DNA"/>
</dbReference>
<dbReference type="EMBL" id="CP002684">
    <property type="protein sequence ID" value="ANM60431.1"/>
    <property type="molecule type" value="Genomic_DNA"/>
</dbReference>
<dbReference type="EMBL" id="AK221614">
    <property type="protein sequence ID" value="BAD95203.1"/>
    <property type="molecule type" value="mRNA"/>
</dbReference>
<dbReference type="PIR" id="H86191">
    <property type="entry name" value="H86191"/>
</dbReference>
<dbReference type="RefSeq" id="NP_001322717.1">
    <property type="nucleotide sequence ID" value="NM_001331574.1"/>
</dbReference>
<dbReference type="RefSeq" id="NP_172066.3">
    <property type="nucleotide sequence ID" value="NM_100455.3"/>
</dbReference>
<dbReference type="SMR" id="Q9MA50"/>
<dbReference type="BioGRID" id="22325">
    <property type="interactions" value="2"/>
</dbReference>
<dbReference type="FunCoup" id="Q9MA50">
    <property type="interactions" value="1217"/>
</dbReference>
<dbReference type="STRING" id="3702.Q9MA50"/>
<dbReference type="PaxDb" id="3702-AT1G05750.1"/>
<dbReference type="ProteomicsDB" id="236591"/>
<dbReference type="EnsemblPlants" id="AT1G05750.1">
    <property type="protein sequence ID" value="AT1G05750.1"/>
    <property type="gene ID" value="AT1G05750"/>
</dbReference>
<dbReference type="EnsemblPlants" id="AT1G05750.2">
    <property type="protein sequence ID" value="AT1G05750.2"/>
    <property type="gene ID" value="AT1G05750"/>
</dbReference>
<dbReference type="GeneID" id="837083"/>
<dbReference type="Gramene" id="AT1G05750.1">
    <property type="protein sequence ID" value="AT1G05750.1"/>
    <property type="gene ID" value="AT1G05750"/>
</dbReference>
<dbReference type="Gramene" id="AT1G05750.2">
    <property type="protein sequence ID" value="AT1G05750.2"/>
    <property type="gene ID" value="AT1G05750"/>
</dbReference>
<dbReference type="KEGG" id="ath:AT1G05750"/>
<dbReference type="Araport" id="AT1G05750"/>
<dbReference type="TAIR" id="AT1G05750">
    <property type="gene designation" value="PDE247"/>
</dbReference>
<dbReference type="eggNOG" id="KOG4197">
    <property type="taxonomic scope" value="Eukaryota"/>
</dbReference>
<dbReference type="HOGENOM" id="CLU_002706_0_2_1"/>
<dbReference type="InParanoid" id="Q9MA50"/>
<dbReference type="OMA" id="VDGYMRN"/>
<dbReference type="PhylomeDB" id="Q9MA50"/>
<dbReference type="PRO" id="PR:Q9MA50"/>
<dbReference type="Proteomes" id="UP000006548">
    <property type="component" value="Chromosome 1"/>
</dbReference>
<dbReference type="ExpressionAtlas" id="Q9MA50">
    <property type="expression patterns" value="baseline and differential"/>
</dbReference>
<dbReference type="GO" id="GO:0009507">
    <property type="term" value="C:chloroplast"/>
    <property type="evidence" value="ECO:0000314"/>
    <property type="project" value="TAIR"/>
</dbReference>
<dbReference type="GO" id="GO:0003723">
    <property type="term" value="F:RNA binding"/>
    <property type="evidence" value="ECO:0007669"/>
    <property type="project" value="InterPro"/>
</dbReference>
<dbReference type="GO" id="GO:0009451">
    <property type="term" value="P:RNA modification"/>
    <property type="evidence" value="ECO:0000315"/>
    <property type="project" value="TAIR"/>
</dbReference>
<dbReference type="FunFam" id="1.25.40.10:FF:000348">
    <property type="entry name" value="Pentatricopeptide repeat-containing protein chloroplastic"/>
    <property type="match status" value="1"/>
</dbReference>
<dbReference type="FunFam" id="1.25.40.10:FF:000184">
    <property type="entry name" value="Pentatricopeptide repeat-containing protein, chloroplastic"/>
    <property type="match status" value="1"/>
</dbReference>
<dbReference type="Gene3D" id="1.25.40.10">
    <property type="entry name" value="Tetratricopeptide repeat domain"/>
    <property type="match status" value="4"/>
</dbReference>
<dbReference type="InterPro" id="IPR046848">
    <property type="entry name" value="E_motif"/>
</dbReference>
<dbReference type="InterPro" id="IPR002885">
    <property type="entry name" value="Pentatricopeptide_rpt"/>
</dbReference>
<dbReference type="InterPro" id="IPR046960">
    <property type="entry name" value="PPR_At4g14850-like_plant"/>
</dbReference>
<dbReference type="InterPro" id="IPR011990">
    <property type="entry name" value="TPR-like_helical_dom_sf"/>
</dbReference>
<dbReference type="NCBIfam" id="TIGR00756">
    <property type="entry name" value="PPR"/>
    <property type="match status" value="6"/>
</dbReference>
<dbReference type="PANTHER" id="PTHR47926">
    <property type="entry name" value="PENTATRICOPEPTIDE REPEAT-CONTAINING PROTEIN"/>
    <property type="match status" value="1"/>
</dbReference>
<dbReference type="PANTHER" id="PTHR47926:SF510">
    <property type="entry name" value="PENTATRICOPEPTIDE REPEAT-CONTAINING PROTEIN"/>
    <property type="match status" value="1"/>
</dbReference>
<dbReference type="Pfam" id="PF20431">
    <property type="entry name" value="E_motif"/>
    <property type="match status" value="1"/>
</dbReference>
<dbReference type="Pfam" id="PF01535">
    <property type="entry name" value="PPR"/>
    <property type="match status" value="2"/>
</dbReference>
<dbReference type="Pfam" id="PF13041">
    <property type="entry name" value="PPR_2"/>
    <property type="match status" value="4"/>
</dbReference>
<dbReference type="PROSITE" id="PS51375">
    <property type="entry name" value="PPR"/>
    <property type="match status" value="9"/>
</dbReference>
<feature type="transit peptide" description="Chloroplast" evidence="1">
    <location>
        <begin position="1"/>
        <end position="54"/>
    </location>
</feature>
<feature type="chain" id="PRO_0000342754" description="Pentatricopeptide repeat-containing protein At1g05750, chloroplastic">
    <location>
        <begin position="55"/>
        <end position="500"/>
    </location>
</feature>
<feature type="repeat" description="PPR 1">
    <location>
        <begin position="35"/>
        <end position="69"/>
    </location>
</feature>
<feature type="repeat" description="PPR 2">
    <location>
        <begin position="70"/>
        <end position="106"/>
    </location>
</feature>
<feature type="repeat" description="PPR 3">
    <location>
        <begin position="108"/>
        <end position="138"/>
    </location>
</feature>
<feature type="repeat" description="PPR 4">
    <location>
        <begin position="139"/>
        <end position="173"/>
    </location>
</feature>
<feature type="repeat" description="PPR 5">
    <location>
        <begin position="174"/>
        <end position="204"/>
    </location>
</feature>
<feature type="repeat" description="PPR 6">
    <location>
        <begin position="205"/>
        <end position="239"/>
    </location>
</feature>
<feature type="repeat" description="PPR 7">
    <location>
        <begin position="240"/>
        <end position="270"/>
    </location>
</feature>
<feature type="repeat" description="PPR 8">
    <location>
        <begin position="271"/>
        <end position="305"/>
    </location>
</feature>
<feature type="repeat" description="PPR 9">
    <location>
        <begin position="306"/>
        <end position="336"/>
    </location>
</feature>
<feature type="repeat" description="PPR 10">
    <location>
        <begin position="342"/>
        <end position="376"/>
    </location>
</feature>
<feature type="region of interest" description="Type E motif">
    <location>
        <begin position="377"/>
        <end position="453"/>
    </location>
</feature>
<feature type="region of interest" description="Type E(+) motif">
    <location>
        <begin position="454"/>
        <end position="484"/>
    </location>
</feature>
<name>PPR13_ARATH</name>
<reference key="1">
    <citation type="journal article" date="2000" name="Nature">
        <title>Sequence and analysis of chromosome 1 of the plant Arabidopsis thaliana.</title>
        <authorList>
            <person name="Theologis A."/>
            <person name="Ecker J.R."/>
            <person name="Palm C.J."/>
            <person name="Federspiel N.A."/>
            <person name="Kaul S."/>
            <person name="White O."/>
            <person name="Alonso J."/>
            <person name="Altafi H."/>
            <person name="Araujo R."/>
            <person name="Bowman C.L."/>
            <person name="Brooks S.Y."/>
            <person name="Buehler E."/>
            <person name="Chan A."/>
            <person name="Chao Q."/>
            <person name="Chen H."/>
            <person name="Cheuk R.F."/>
            <person name="Chin C.W."/>
            <person name="Chung M.K."/>
            <person name="Conn L."/>
            <person name="Conway A.B."/>
            <person name="Conway A.R."/>
            <person name="Creasy T.H."/>
            <person name="Dewar K."/>
            <person name="Dunn P."/>
            <person name="Etgu P."/>
            <person name="Feldblyum T.V."/>
            <person name="Feng J.-D."/>
            <person name="Fong B."/>
            <person name="Fujii C.Y."/>
            <person name="Gill J.E."/>
            <person name="Goldsmith A.D."/>
            <person name="Haas B."/>
            <person name="Hansen N.F."/>
            <person name="Hughes B."/>
            <person name="Huizar L."/>
            <person name="Hunter J.L."/>
            <person name="Jenkins J."/>
            <person name="Johnson-Hopson C."/>
            <person name="Khan S."/>
            <person name="Khaykin E."/>
            <person name="Kim C.J."/>
            <person name="Koo H.L."/>
            <person name="Kremenetskaia I."/>
            <person name="Kurtz D.B."/>
            <person name="Kwan A."/>
            <person name="Lam B."/>
            <person name="Langin-Hooper S."/>
            <person name="Lee A."/>
            <person name="Lee J.M."/>
            <person name="Lenz C.A."/>
            <person name="Li J.H."/>
            <person name="Li Y.-P."/>
            <person name="Lin X."/>
            <person name="Liu S.X."/>
            <person name="Liu Z.A."/>
            <person name="Luros J.S."/>
            <person name="Maiti R."/>
            <person name="Marziali A."/>
            <person name="Militscher J."/>
            <person name="Miranda M."/>
            <person name="Nguyen M."/>
            <person name="Nierman W.C."/>
            <person name="Osborne B.I."/>
            <person name="Pai G."/>
            <person name="Peterson J."/>
            <person name="Pham P.K."/>
            <person name="Rizzo M."/>
            <person name="Rooney T."/>
            <person name="Rowley D."/>
            <person name="Sakano H."/>
            <person name="Salzberg S.L."/>
            <person name="Schwartz J.R."/>
            <person name="Shinn P."/>
            <person name="Southwick A.M."/>
            <person name="Sun H."/>
            <person name="Tallon L.J."/>
            <person name="Tambunga G."/>
            <person name="Toriumi M.J."/>
            <person name="Town C.D."/>
            <person name="Utterback T."/>
            <person name="Van Aken S."/>
            <person name="Vaysberg M."/>
            <person name="Vysotskaia V.S."/>
            <person name="Walker M."/>
            <person name="Wu D."/>
            <person name="Yu G."/>
            <person name="Fraser C.M."/>
            <person name="Venter J.C."/>
            <person name="Davis R.W."/>
        </authorList>
    </citation>
    <scope>NUCLEOTIDE SEQUENCE [LARGE SCALE GENOMIC DNA]</scope>
    <source>
        <strain>cv. Columbia</strain>
    </source>
</reference>
<reference key="2">
    <citation type="journal article" date="2017" name="Plant J.">
        <title>Araport11: a complete reannotation of the Arabidopsis thaliana reference genome.</title>
        <authorList>
            <person name="Cheng C.Y."/>
            <person name="Krishnakumar V."/>
            <person name="Chan A.P."/>
            <person name="Thibaud-Nissen F."/>
            <person name="Schobel S."/>
            <person name="Town C.D."/>
        </authorList>
    </citation>
    <scope>GENOME REANNOTATION</scope>
    <source>
        <strain>cv. Columbia</strain>
    </source>
</reference>
<reference key="3">
    <citation type="submission" date="2005-03" db="EMBL/GenBank/DDBJ databases">
        <title>Large-scale analysis of RIKEN Arabidopsis full-length (RAFL) cDNAs.</title>
        <authorList>
            <person name="Totoki Y."/>
            <person name="Seki M."/>
            <person name="Ishida J."/>
            <person name="Nakajima M."/>
            <person name="Enju A."/>
            <person name="Kamiya A."/>
            <person name="Narusaka M."/>
            <person name="Shin-i T."/>
            <person name="Nakagawa M."/>
            <person name="Sakamoto N."/>
            <person name="Oishi K."/>
            <person name="Kohara Y."/>
            <person name="Kobayashi M."/>
            <person name="Toyoda A."/>
            <person name="Sakaki Y."/>
            <person name="Sakurai T."/>
            <person name="Iida K."/>
            <person name="Akiyama K."/>
            <person name="Satou M."/>
            <person name="Toyoda T."/>
            <person name="Konagaya A."/>
            <person name="Carninci P."/>
            <person name="Kawai J."/>
            <person name="Hayashizaki Y."/>
            <person name="Shinozaki K."/>
        </authorList>
    </citation>
    <scope>NUCLEOTIDE SEQUENCE [LARGE SCALE MRNA]</scope>
    <source>
        <strain>cv. Columbia</strain>
    </source>
</reference>
<reference key="4">
    <citation type="journal article" date="2004" name="Plant Cell">
        <title>Genome-wide analysis of Arabidopsis pentatricopeptide repeat proteins reveals their essential role in organelle biogenesis.</title>
        <authorList>
            <person name="Lurin C."/>
            <person name="Andres C."/>
            <person name="Aubourg S."/>
            <person name="Bellaoui M."/>
            <person name="Bitton F."/>
            <person name="Bruyere C."/>
            <person name="Caboche M."/>
            <person name="Debast C."/>
            <person name="Gualberto J."/>
            <person name="Hoffmann B."/>
            <person name="Lecharny A."/>
            <person name="Le Ret M."/>
            <person name="Martin-Magniette M.-L."/>
            <person name="Mireau H."/>
            <person name="Peeters N."/>
            <person name="Renou J.-P."/>
            <person name="Szurek B."/>
            <person name="Taconnat L."/>
            <person name="Small I."/>
        </authorList>
    </citation>
    <scope>GENE FAMILY</scope>
</reference>
<proteinExistence type="evidence at transcript level"/>
<gene>
    <name type="primary">PDE247</name>
    <name type="synonym">PCMP-E59</name>
    <name type="ordered locus">At1g05750</name>
    <name type="ORF">T20M3.1</name>
</gene>
<comment type="subcellular location">
    <subcellularLocation>
        <location evidence="2">Plastid</location>
        <location evidence="2">Chloroplast</location>
    </subcellularLocation>
</comment>
<comment type="similarity">
    <text evidence="2">Belongs to the PPR family. PCMP-E subfamily.</text>
</comment>
<comment type="online information" name="Pentatricopeptide repeat proteins">
    <link uri="https://ppr.plantenergy.uwa.edu.au"/>
</comment>
<sequence>MGLLPVVGITSPALITHKNHANPKIQRHNQSTSETTVSWTSRINLLTRNGRLAEAAKEFSDMTLAGVEPNHITFIALLSGCGDFTSGSEALGDLLHGYACKLGLDRNHVMVGTAIIGMYSKRGRFKKARLVFDYMEDKNSVTWNTMIDGYMRSGQVDNAAKMFDKMPERDLISWTAMINGFVKKGYQEEALLWFREMQISGVKPDYVAIIAALNACTNLGALSFGLWVHRYVLSQDFKNNVRVSNSLIDLYCRCGCVEFARQVFYNMEKRTVVSWNSVIVGFAANGNAHESLVYFRKMQEKGFKPDAVTFTGALTACSHVGLVEEGLRYFQIMKCDYRISPRIEHYGCLVDLYSRAGRLEDALKLVQSMPMKPNEVVIGSLLAACSNHGNNIVLAERLMKHLTDLNVKSHSNYVILSNMYAADGKWEGASKMRRKMKGLGLKKQPGFSSIEIDDCMHVFMAGDNAHVETTYIREVLELISSDLRLQGCVVETLAGDLLNA</sequence>
<protein>
    <recommendedName>
        <fullName>Pentatricopeptide repeat-containing protein At1g05750, chloroplastic</fullName>
    </recommendedName>
    <alternativeName>
        <fullName>Protein PIGMENT DEFECTIVE 247</fullName>
    </alternativeName>
</protein>